<protein>
    <recommendedName>
        <fullName>Syntaxin-19</fullName>
    </recommendedName>
</protein>
<dbReference type="EMBL" id="CR859001">
    <property type="protein sequence ID" value="CAH91196.1"/>
    <property type="molecule type" value="mRNA"/>
</dbReference>
<dbReference type="RefSeq" id="NP_001125702.1">
    <property type="nucleotide sequence ID" value="NM_001132230.1"/>
</dbReference>
<dbReference type="RefSeq" id="XP_009236943.1">
    <property type="nucleotide sequence ID" value="XM_009238668.1"/>
</dbReference>
<dbReference type="RefSeq" id="XP_024099821.2">
    <property type="nucleotide sequence ID" value="XM_024244053.2"/>
</dbReference>
<dbReference type="RefSeq" id="XP_054406263.1">
    <property type="nucleotide sequence ID" value="XM_054550288.2"/>
</dbReference>
<dbReference type="RefSeq" id="XP_054406264.1">
    <property type="nucleotide sequence ID" value="XM_054550289.1"/>
</dbReference>
<dbReference type="RefSeq" id="XP_054406265.1">
    <property type="nucleotide sequence ID" value="XM_054550290.1"/>
</dbReference>
<dbReference type="RefSeq" id="XP_054406266.1">
    <property type="nucleotide sequence ID" value="XM_054550291.1"/>
</dbReference>
<dbReference type="SMR" id="Q5RAL4"/>
<dbReference type="FunCoup" id="Q5RAL4">
    <property type="interactions" value="142"/>
</dbReference>
<dbReference type="STRING" id="9601.ENSPPYP00000015239"/>
<dbReference type="GeneID" id="100172626"/>
<dbReference type="KEGG" id="pon:100172626"/>
<dbReference type="CTD" id="415117"/>
<dbReference type="eggNOG" id="KOG0810">
    <property type="taxonomic scope" value="Eukaryota"/>
</dbReference>
<dbReference type="HOGENOM" id="CLU_042423_2_0_1"/>
<dbReference type="InParanoid" id="Q5RAL4"/>
<dbReference type="TreeFam" id="TF313763"/>
<dbReference type="Proteomes" id="UP000001595">
    <property type="component" value="Chromosome 3"/>
</dbReference>
<dbReference type="GO" id="GO:0048787">
    <property type="term" value="C:presynaptic active zone membrane"/>
    <property type="evidence" value="ECO:0007669"/>
    <property type="project" value="TreeGrafter"/>
</dbReference>
<dbReference type="GO" id="GO:0031201">
    <property type="term" value="C:SNARE complex"/>
    <property type="evidence" value="ECO:0007669"/>
    <property type="project" value="TreeGrafter"/>
</dbReference>
<dbReference type="GO" id="GO:0008021">
    <property type="term" value="C:synaptic vesicle"/>
    <property type="evidence" value="ECO:0007669"/>
    <property type="project" value="TreeGrafter"/>
</dbReference>
<dbReference type="GO" id="GO:0005484">
    <property type="term" value="F:SNAP receptor activity"/>
    <property type="evidence" value="ECO:0007669"/>
    <property type="project" value="InterPro"/>
</dbReference>
<dbReference type="GO" id="GO:0000149">
    <property type="term" value="F:SNARE binding"/>
    <property type="evidence" value="ECO:0007669"/>
    <property type="project" value="TreeGrafter"/>
</dbReference>
<dbReference type="GO" id="GO:0006886">
    <property type="term" value="P:intracellular protein transport"/>
    <property type="evidence" value="ECO:0007669"/>
    <property type="project" value="InterPro"/>
</dbReference>
<dbReference type="GO" id="GO:0031629">
    <property type="term" value="P:synaptic vesicle fusion to presynaptic active zone membrane"/>
    <property type="evidence" value="ECO:0007669"/>
    <property type="project" value="TreeGrafter"/>
</dbReference>
<dbReference type="GO" id="GO:0048278">
    <property type="term" value="P:vesicle docking"/>
    <property type="evidence" value="ECO:0007669"/>
    <property type="project" value="TreeGrafter"/>
</dbReference>
<dbReference type="CDD" id="cd00179">
    <property type="entry name" value="SynN"/>
    <property type="match status" value="1"/>
</dbReference>
<dbReference type="FunFam" id="1.20.5.110:FF:000022">
    <property type="entry name" value="Syntaxin 19"/>
    <property type="match status" value="1"/>
</dbReference>
<dbReference type="FunFam" id="1.20.58.70:FF:000017">
    <property type="entry name" value="Syntaxin 19"/>
    <property type="match status" value="1"/>
</dbReference>
<dbReference type="Gene3D" id="1.20.5.110">
    <property type="match status" value="1"/>
</dbReference>
<dbReference type="Gene3D" id="1.20.58.70">
    <property type="match status" value="1"/>
</dbReference>
<dbReference type="InterPro" id="IPR010989">
    <property type="entry name" value="SNARE"/>
</dbReference>
<dbReference type="InterPro" id="IPR045242">
    <property type="entry name" value="Syntaxin"/>
</dbReference>
<dbReference type="InterPro" id="IPR006012">
    <property type="entry name" value="Syntaxin/epimorphin_CS"/>
</dbReference>
<dbReference type="InterPro" id="IPR006011">
    <property type="entry name" value="Syntaxin_N"/>
</dbReference>
<dbReference type="InterPro" id="IPR000727">
    <property type="entry name" value="T_SNARE_dom"/>
</dbReference>
<dbReference type="PANTHER" id="PTHR19957">
    <property type="entry name" value="SYNTAXIN"/>
    <property type="match status" value="1"/>
</dbReference>
<dbReference type="PANTHER" id="PTHR19957:SF29">
    <property type="entry name" value="SYNTAXIN-19"/>
    <property type="match status" value="1"/>
</dbReference>
<dbReference type="Pfam" id="PF00804">
    <property type="entry name" value="Syntaxin"/>
    <property type="match status" value="1"/>
</dbReference>
<dbReference type="SMART" id="SM00397">
    <property type="entry name" value="t_SNARE"/>
    <property type="match status" value="1"/>
</dbReference>
<dbReference type="SUPFAM" id="SSF47661">
    <property type="entry name" value="t-snare proteins"/>
    <property type="match status" value="1"/>
</dbReference>
<dbReference type="PROSITE" id="PS00914">
    <property type="entry name" value="SYNTAXIN"/>
    <property type="match status" value="1"/>
</dbReference>
<dbReference type="PROSITE" id="PS50192">
    <property type="entry name" value="T_SNARE"/>
    <property type="match status" value="1"/>
</dbReference>
<keyword id="KW-1003">Cell membrane</keyword>
<keyword id="KW-0175">Coiled coil</keyword>
<keyword id="KW-0963">Cytoplasm</keyword>
<keyword id="KW-0472">Membrane</keyword>
<keyword id="KW-1185">Reference proteome</keyword>
<keyword id="KW-0813">Transport</keyword>
<gene>
    <name type="primary">STX19</name>
</gene>
<evidence type="ECO:0000250" key="1">
    <source>
        <dbReference type="UniProtKB" id="Q8R1Q0"/>
    </source>
</evidence>
<evidence type="ECO:0000255" key="2">
    <source>
        <dbReference type="PROSITE-ProRule" id="PRU00202"/>
    </source>
</evidence>
<evidence type="ECO:0000305" key="3"/>
<name>STX19_PONAB</name>
<proteinExistence type="evidence at transcript level"/>
<sequence length="294" mass="34243">MKDRLQELKQRTKEIELSRDSHVSTTETEEQGVFLQQAVIYEREPVAERHLHEIQKLQESINNLADNVQKFGQQQKSLVASMRRFSLLKRESTVTKEVKIQAEYINRSLNDLVKEVKKSEVENGPSSVVTRILKSQHAAMFCHFQQIMFIYNDTIAAKQEKCKTFILRQLEVAGKEMSEEDVNDMLHQGKWEVFNESLLTEINITKAQLSEIEQRHKELVNLENQIKDLRDLFIQLSLLVEEQGESINNIEMTVNSTKEYVNNTKEKFGLAVKYKKRNPCRVLCCWCCPCCSSK</sequence>
<comment type="function">
    <text evidence="1">Plays a role in endosomal trafficking of the epidermal growth factor receptor (EGFR).</text>
</comment>
<comment type="subunit">
    <text evidence="1">Interacts with EGFR.</text>
</comment>
<comment type="subcellular location">
    <subcellularLocation>
        <location evidence="1">Cell membrane</location>
        <topology evidence="1">Peripheral membrane protein</topology>
    </subcellularLocation>
    <subcellularLocation>
        <location evidence="1">Cytoplasm</location>
    </subcellularLocation>
</comment>
<comment type="similarity">
    <text evidence="3">Belongs to the syntaxin family.</text>
</comment>
<organism>
    <name type="scientific">Pongo abelii</name>
    <name type="common">Sumatran orangutan</name>
    <name type="synonym">Pongo pygmaeus abelii</name>
    <dbReference type="NCBI Taxonomy" id="9601"/>
    <lineage>
        <taxon>Eukaryota</taxon>
        <taxon>Metazoa</taxon>
        <taxon>Chordata</taxon>
        <taxon>Craniata</taxon>
        <taxon>Vertebrata</taxon>
        <taxon>Euteleostomi</taxon>
        <taxon>Mammalia</taxon>
        <taxon>Eutheria</taxon>
        <taxon>Euarchontoglires</taxon>
        <taxon>Primates</taxon>
        <taxon>Haplorrhini</taxon>
        <taxon>Catarrhini</taxon>
        <taxon>Hominidae</taxon>
        <taxon>Pongo</taxon>
    </lineage>
</organism>
<feature type="chain" id="PRO_0000263711" description="Syntaxin-19">
    <location>
        <begin position="1"/>
        <end position="294"/>
    </location>
</feature>
<feature type="domain" description="t-SNARE coiled-coil homology" evidence="2">
    <location>
        <begin position="209"/>
        <end position="271"/>
    </location>
</feature>
<accession>Q5RAL4</accession>
<reference key="1">
    <citation type="submission" date="2004-11" db="EMBL/GenBank/DDBJ databases">
        <authorList>
            <consortium name="The German cDNA consortium"/>
        </authorList>
    </citation>
    <scope>NUCLEOTIDE SEQUENCE [LARGE SCALE MRNA]</scope>
    <source>
        <tissue>Kidney</tissue>
    </source>
</reference>